<keyword id="KW-0903">Direct protein sequencing</keyword>
<keyword id="KW-0372">Hormone</keyword>
<keyword id="KW-0964">Secreted</keyword>
<sequence length="29" mass="3470">HSQGTFTSDYSKYLDTRRAQDFVQWLMST</sequence>
<comment type="function">
    <text>Glucagon plays a key role in glucose metabolism and homeostasis. Regulates blood glucose by increasing gluconeogenesis and decreasing glycolysis.</text>
</comment>
<comment type="subcellular location">
    <subcellularLocation>
        <location>Secreted</location>
    </subcellularLocation>
</comment>
<comment type="induction">
    <text>Produced in the A cells of the islets of Langerhans in response to a drop in blood sugar concentration.</text>
</comment>
<comment type="similarity">
    <text evidence="1">Belongs to the glucagon family.</text>
</comment>
<gene>
    <name type="primary">GCG</name>
</gene>
<proteinExistence type="evidence at protein level"/>
<protein>
    <recommendedName>
        <fullName>Glucagon</fullName>
    </recommendedName>
</protein>
<accession>P68953</accession>
<accession>P01276</accession>
<evidence type="ECO:0000305" key="1"/>
<feature type="peptide" id="PRO_0000043924" description="Glucagon">
    <location>
        <begin position="1"/>
        <end position="29"/>
    </location>
</feature>
<reference key="1">
    <citation type="journal article" date="1991" name="Int. J. Pept. Protein Res.">
        <title>Purification and primary structure of glucagon from ostrich pancreas splenic lobes.</title>
        <authorList>
            <person name="Ferreira A."/>
            <person name="Litthauer D."/>
            <person name="Saayman H."/>
            <person name="Oelofsen W."/>
            <person name="Crabb J."/>
            <person name="Lazure C."/>
        </authorList>
    </citation>
    <scope>PROTEIN SEQUENCE</scope>
    <source>
        <tissue>Pancreas</tissue>
    </source>
</reference>
<name>GLUC_STRCA</name>
<dbReference type="PIR" id="A61583">
    <property type="entry name" value="A61583"/>
</dbReference>
<dbReference type="SMR" id="P68953"/>
<dbReference type="GO" id="GO:0005576">
    <property type="term" value="C:extracellular region"/>
    <property type="evidence" value="ECO:0007669"/>
    <property type="project" value="UniProtKB-SubCell"/>
</dbReference>
<dbReference type="GO" id="GO:0005179">
    <property type="term" value="F:hormone activity"/>
    <property type="evidence" value="ECO:0007669"/>
    <property type="project" value="UniProtKB-KW"/>
</dbReference>
<dbReference type="Gene3D" id="6.10.250.590">
    <property type="match status" value="1"/>
</dbReference>
<dbReference type="InterPro" id="IPR015550">
    <property type="entry name" value="Glucagon"/>
</dbReference>
<dbReference type="InterPro" id="IPR000532">
    <property type="entry name" value="Glucagon_GIP_secretin_VIP"/>
</dbReference>
<dbReference type="PANTHER" id="PTHR11418">
    <property type="entry name" value="GLUCAGON"/>
    <property type="match status" value="1"/>
</dbReference>
<dbReference type="PANTHER" id="PTHR11418:SF0">
    <property type="entry name" value="PRO-GLUCAGON"/>
    <property type="match status" value="1"/>
</dbReference>
<dbReference type="Pfam" id="PF00123">
    <property type="entry name" value="Hormone_2"/>
    <property type="match status" value="1"/>
</dbReference>
<dbReference type="PRINTS" id="PR00275">
    <property type="entry name" value="GLUCAGON"/>
</dbReference>
<dbReference type="SMART" id="SM00070">
    <property type="entry name" value="GLUCA"/>
    <property type="match status" value="1"/>
</dbReference>
<dbReference type="PROSITE" id="PS00260">
    <property type="entry name" value="GLUCAGON"/>
    <property type="match status" value="1"/>
</dbReference>
<organism>
    <name type="scientific">Struthio camelus</name>
    <name type="common">Common ostrich</name>
    <dbReference type="NCBI Taxonomy" id="8801"/>
    <lineage>
        <taxon>Eukaryota</taxon>
        <taxon>Metazoa</taxon>
        <taxon>Chordata</taxon>
        <taxon>Craniata</taxon>
        <taxon>Vertebrata</taxon>
        <taxon>Euteleostomi</taxon>
        <taxon>Archelosauria</taxon>
        <taxon>Archosauria</taxon>
        <taxon>Dinosauria</taxon>
        <taxon>Saurischia</taxon>
        <taxon>Theropoda</taxon>
        <taxon>Coelurosauria</taxon>
        <taxon>Aves</taxon>
        <taxon>Palaeognathae</taxon>
        <taxon>Struthioniformes</taxon>
        <taxon>Struthionidae</taxon>
        <taxon>Struthio</taxon>
    </lineage>
</organism>